<dbReference type="EC" id="6.1.1.14"/>
<dbReference type="EMBL" id="AE004439">
    <property type="protein sequence ID" value="AAK03186.1"/>
    <property type="molecule type" value="Genomic_DNA"/>
</dbReference>
<dbReference type="RefSeq" id="WP_010907018.1">
    <property type="nucleotide sequence ID" value="NC_002663.1"/>
</dbReference>
<dbReference type="SMR" id="P57905"/>
<dbReference type="STRING" id="272843.PM1102"/>
<dbReference type="EnsemblBacteria" id="AAK03186">
    <property type="protein sequence ID" value="AAK03186"/>
    <property type="gene ID" value="PM1102"/>
</dbReference>
<dbReference type="KEGG" id="pmu:PM1102"/>
<dbReference type="PATRIC" id="fig|272843.6.peg.1115"/>
<dbReference type="HOGENOM" id="CLU_007220_2_2_6"/>
<dbReference type="OrthoDB" id="9775440at2"/>
<dbReference type="Proteomes" id="UP000000809">
    <property type="component" value="Chromosome"/>
</dbReference>
<dbReference type="GO" id="GO:0005829">
    <property type="term" value="C:cytosol"/>
    <property type="evidence" value="ECO:0007669"/>
    <property type="project" value="TreeGrafter"/>
</dbReference>
<dbReference type="GO" id="GO:0004814">
    <property type="term" value="F:arginine-tRNA ligase activity"/>
    <property type="evidence" value="ECO:0007669"/>
    <property type="project" value="InterPro"/>
</dbReference>
<dbReference type="GO" id="GO:0005524">
    <property type="term" value="F:ATP binding"/>
    <property type="evidence" value="ECO:0007669"/>
    <property type="project" value="UniProtKB-UniRule"/>
</dbReference>
<dbReference type="GO" id="GO:0004820">
    <property type="term" value="F:glycine-tRNA ligase activity"/>
    <property type="evidence" value="ECO:0007669"/>
    <property type="project" value="UniProtKB-UniRule"/>
</dbReference>
<dbReference type="GO" id="GO:0006420">
    <property type="term" value="P:arginyl-tRNA aminoacylation"/>
    <property type="evidence" value="ECO:0007669"/>
    <property type="project" value="InterPro"/>
</dbReference>
<dbReference type="GO" id="GO:0006426">
    <property type="term" value="P:glycyl-tRNA aminoacylation"/>
    <property type="evidence" value="ECO:0007669"/>
    <property type="project" value="UniProtKB-UniRule"/>
</dbReference>
<dbReference type="HAMAP" id="MF_00255">
    <property type="entry name" value="Gly_tRNA_synth_beta"/>
    <property type="match status" value="1"/>
</dbReference>
<dbReference type="InterPro" id="IPR008909">
    <property type="entry name" value="DALR_anticod-bd"/>
</dbReference>
<dbReference type="InterPro" id="IPR015944">
    <property type="entry name" value="Gly-tRNA-synth_bsu"/>
</dbReference>
<dbReference type="InterPro" id="IPR006194">
    <property type="entry name" value="Gly-tRNA-synth_heterodimer"/>
</dbReference>
<dbReference type="NCBIfam" id="TIGR00211">
    <property type="entry name" value="glyS"/>
    <property type="match status" value="1"/>
</dbReference>
<dbReference type="PANTHER" id="PTHR30075:SF2">
    <property type="entry name" value="GLYCINE--TRNA LIGASE, CHLOROPLASTIC_MITOCHONDRIAL 2"/>
    <property type="match status" value="1"/>
</dbReference>
<dbReference type="PANTHER" id="PTHR30075">
    <property type="entry name" value="GLYCYL-TRNA SYNTHETASE"/>
    <property type="match status" value="1"/>
</dbReference>
<dbReference type="Pfam" id="PF05746">
    <property type="entry name" value="DALR_1"/>
    <property type="match status" value="1"/>
</dbReference>
<dbReference type="Pfam" id="PF02092">
    <property type="entry name" value="tRNA_synt_2f"/>
    <property type="match status" value="1"/>
</dbReference>
<dbReference type="PRINTS" id="PR01045">
    <property type="entry name" value="TRNASYNTHGB"/>
</dbReference>
<dbReference type="SUPFAM" id="SSF109604">
    <property type="entry name" value="HD-domain/PDEase-like"/>
    <property type="match status" value="1"/>
</dbReference>
<dbReference type="PROSITE" id="PS50861">
    <property type="entry name" value="AA_TRNA_LIGASE_II_GLYAB"/>
    <property type="match status" value="1"/>
</dbReference>
<organism>
    <name type="scientific">Pasteurella multocida (strain Pm70)</name>
    <dbReference type="NCBI Taxonomy" id="272843"/>
    <lineage>
        <taxon>Bacteria</taxon>
        <taxon>Pseudomonadati</taxon>
        <taxon>Pseudomonadota</taxon>
        <taxon>Gammaproteobacteria</taxon>
        <taxon>Pasteurellales</taxon>
        <taxon>Pasteurellaceae</taxon>
        <taxon>Pasteurella</taxon>
    </lineage>
</organism>
<name>SYGB_PASMU</name>
<gene>
    <name type="primary">glyS</name>
    <name type="ordered locus">PM1102</name>
</gene>
<reference key="1">
    <citation type="journal article" date="2001" name="Proc. Natl. Acad. Sci. U.S.A.">
        <title>Complete genomic sequence of Pasteurella multocida Pm70.</title>
        <authorList>
            <person name="May B.J."/>
            <person name="Zhang Q."/>
            <person name="Li L.L."/>
            <person name="Paustian M.L."/>
            <person name="Whittam T.S."/>
            <person name="Kapur V."/>
        </authorList>
    </citation>
    <scope>NUCLEOTIDE SEQUENCE [LARGE SCALE GENOMIC DNA]</scope>
    <source>
        <strain>Pm70</strain>
    </source>
</reference>
<evidence type="ECO:0000250" key="1"/>
<evidence type="ECO:0000305" key="2"/>
<proteinExistence type="inferred from homology"/>
<comment type="catalytic activity">
    <reaction>
        <text>tRNA(Gly) + glycine + ATP = glycyl-tRNA(Gly) + AMP + diphosphate</text>
        <dbReference type="Rhea" id="RHEA:16013"/>
        <dbReference type="Rhea" id="RHEA-COMP:9664"/>
        <dbReference type="Rhea" id="RHEA-COMP:9683"/>
        <dbReference type="ChEBI" id="CHEBI:30616"/>
        <dbReference type="ChEBI" id="CHEBI:33019"/>
        <dbReference type="ChEBI" id="CHEBI:57305"/>
        <dbReference type="ChEBI" id="CHEBI:78442"/>
        <dbReference type="ChEBI" id="CHEBI:78522"/>
        <dbReference type="ChEBI" id="CHEBI:456215"/>
        <dbReference type="EC" id="6.1.1.14"/>
    </reaction>
</comment>
<comment type="subunit">
    <text evidence="1">Tetramer of two alpha and two beta subunits.</text>
</comment>
<comment type="subcellular location">
    <subcellularLocation>
        <location evidence="1">Cytoplasm</location>
    </subcellularLocation>
</comment>
<comment type="similarity">
    <text evidence="2">Belongs to the class-II aminoacyl-tRNA synthetase family.</text>
</comment>
<accession>P57905</accession>
<protein>
    <recommendedName>
        <fullName>Glycine--tRNA ligase beta subunit</fullName>
        <ecNumber>6.1.1.14</ecNumber>
    </recommendedName>
    <alternativeName>
        <fullName>Glycyl-tRNA synthetase beta subunit</fullName>
        <shortName>GlyRS</shortName>
    </alternativeName>
</protein>
<keyword id="KW-0030">Aminoacyl-tRNA synthetase</keyword>
<keyword id="KW-0067">ATP-binding</keyword>
<keyword id="KW-0963">Cytoplasm</keyword>
<keyword id="KW-0436">Ligase</keyword>
<keyword id="KW-0547">Nucleotide-binding</keyword>
<keyword id="KW-0648">Protein biosynthesis</keyword>
<keyword id="KW-1185">Reference proteome</keyword>
<feature type="chain" id="PRO_0000072917" description="Glycine--tRNA ligase beta subunit">
    <location>
        <begin position="1"/>
        <end position="689"/>
    </location>
</feature>
<sequence length="689" mass="76019">MTTQNFLAEIGTEELPPKALKKLATAFAENMELELNQAGLAFESVQWFAAPRRLAVKVLALATSQPSKEIEKRGPAVSAAFDAEGKPTKAAEGWARGCGISVEQAERVATDKGEWLVHRATIEGQPTKNLLKDMVANALAKLPIPKPMRWADKTVQFIRPVHTVTMLLGDELIEGEILGVESARTLRGHRFLGEREFQISHADQYPALLKEKGSVVADFNDRKALILAKSQEKATALGGVADIEDDLLDEVTSLVEYPNVLAAKFEERFLAVPAEALVYTMKGDQKYFPIYDKDGKLLPHFIFVSNINPDDPSKIIEGNEKVVRPRLTDAEFFFKTDLKQRLEDQLPRLETVLFQQQLGTLRDKTARIEQLAGEIAKQIGADEVKAKRAGLLSKCDLMTNMVFEFTDTQGVMGMHYARHDGEDEEVAVALNEQYMPRFAGDELPKSLVASAVALADKFDTLTGIFGIGQQPKGSADPFALRRAALGALRIIVEKNLPLDLAEIVKKSSALFGDKLTNANVVEDVVEFMLGRFRAWYQDEGIAVDVIQAVLARRPTKPSDFDARVRAVSHFRALEAAEALAAANKRVSNILAKVEGELPANIDTTLCAEAAEKVLAEQVIALQAELAPLFAKGEYQVALDRLAALREPVDTFFDNVMVNAENPQLRQNRLAILNNLRNLFLQVADISLLQ</sequence>